<accession>P44363</accession>
<dbReference type="EMBL" id="L42023">
    <property type="protein sequence ID" value="AAC22535.1"/>
    <property type="molecule type" value="Genomic_DNA"/>
</dbReference>
<dbReference type="PIR" id="F64099">
    <property type="entry name" value="F64099"/>
</dbReference>
<dbReference type="RefSeq" id="NP_439040.1">
    <property type="nucleotide sequence ID" value="NC_000907.1"/>
</dbReference>
<dbReference type="SMR" id="P44363"/>
<dbReference type="STRING" id="71421.HI_0879"/>
<dbReference type="EnsemblBacteria" id="AAC22535">
    <property type="protein sequence ID" value="AAC22535"/>
    <property type="gene ID" value="HI_0879"/>
</dbReference>
<dbReference type="KEGG" id="hin:HI_0879"/>
<dbReference type="PATRIC" id="fig|71421.8.peg.921"/>
<dbReference type="eggNOG" id="COG0211">
    <property type="taxonomic scope" value="Bacteria"/>
</dbReference>
<dbReference type="HOGENOM" id="CLU_095424_4_1_6"/>
<dbReference type="OrthoDB" id="9803474at2"/>
<dbReference type="PhylomeDB" id="P44363"/>
<dbReference type="BioCyc" id="HINF71421:G1GJ1-919-MONOMER"/>
<dbReference type="Proteomes" id="UP000000579">
    <property type="component" value="Chromosome"/>
</dbReference>
<dbReference type="GO" id="GO:0022625">
    <property type="term" value="C:cytosolic large ribosomal subunit"/>
    <property type="evidence" value="ECO:0000318"/>
    <property type="project" value="GO_Central"/>
</dbReference>
<dbReference type="GO" id="GO:0003735">
    <property type="term" value="F:structural constituent of ribosome"/>
    <property type="evidence" value="ECO:0000318"/>
    <property type="project" value="GO_Central"/>
</dbReference>
<dbReference type="GO" id="GO:0006412">
    <property type="term" value="P:translation"/>
    <property type="evidence" value="ECO:0007669"/>
    <property type="project" value="UniProtKB-UniRule"/>
</dbReference>
<dbReference type="FunFam" id="2.40.50.100:FF:000001">
    <property type="entry name" value="50S ribosomal protein L27"/>
    <property type="match status" value="1"/>
</dbReference>
<dbReference type="Gene3D" id="2.40.50.100">
    <property type="match status" value="1"/>
</dbReference>
<dbReference type="HAMAP" id="MF_00539">
    <property type="entry name" value="Ribosomal_bL27"/>
    <property type="match status" value="1"/>
</dbReference>
<dbReference type="InterPro" id="IPR001684">
    <property type="entry name" value="Ribosomal_bL27"/>
</dbReference>
<dbReference type="InterPro" id="IPR018261">
    <property type="entry name" value="Ribosomal_bL27_CS"/>
</dbReference>
<dbReference type="NCBIfam" id="TIGR00062">
    <property type="entry name" value="L27"/>
    <property type="match status" value="1"/>
</dbReference>
<dbReference type="PANTHER" id="PTHR15893:SF0">
    <property type="entry name" value="LARGE RIBOSOMAL SUBUNIT PROTEIN BL27M"/>
    <property type="match status" value="1"/>
</dbReference>
<dbReference type="PANTHER" id="PTHR15893">
    <property type="entry name" value="RIBOSOMAL PROTEIN L27"/>
    <property type="match status" value="1"/>
</dbReference>
<dbReference type="Pfam" id="PF01016">
    <property type="entry name" value="Ribosomal_L27"/>
    <property type="match status" value="1"/>
</dbReference>
<dbReference type="PRINTS" id="PR00063">
    <property type="entry name" value="RIBOSOMALL27"/>
</dbReference>
<dbReference type="SUPFAM" id="SSF110324">
    <property type="entry name" value="Ribosomal L27 protein-like"/>
    <property type="match status" value="1"/>
</dbReference>
<dbReference type="PROSITE" id="PS00831">
    <property type="entry name" value="RIBOSOMAL_L27"/>
    <property type="match status" value="1"/>
</dbReference>
<feature type="initiator methionine" description="Removed" evidence="1">
    <location>
        <position position="1"/>
    </location>
</feature>
<feature type="chain" id="PRO_0000181097" description="Large ribosomal subunit protein bL27">
    <location>
        <begin position="2"/>
        <end position="85"/>
    </location>
</feature>
<feature type="region of interest" description="Disordered" evidence="3">
    <location>
        <begin position="1"/>
        <end position="20"/>
    </location>
</feature>
<reference key="1">
    <citation type="journal article" date="1995" name="Science">
        <title>Whole-genome random sequencing and assembly of Haemophilus influenzae Rd.</title>
        <authorList>
            <person name="Fleischmann R.D."/>
            <person name="Adams M.D."/>
            <person name="White O."/>
            <person name="Clayton R.A."/>
            <person name="Kirkness E.F."/>
            <person name="Kerlavage A.R."/>
            <person name="Bult C.J."/>
            <person name="Tomb J.-F."/>
            <person name="Dougherty B.A."/>
            <person name="Merrick J.M."/>
            <person name="McKenney K."/>
            <person name="Sutton G.G."/>
            <person name="FitzHugh W."/>
            <person name="Fields C.A."/>
            <person name="Gocayne J.D."/>
            <person name="Scott J.D."/>
            <person name="Shirley R."/>
            <person name="Liu L.-I."/>
            <person name="Glodek A."/>
            <person name="Kelley J.M."/>
            <person name="Weidman J.F."/>
            <person name="Phillips C.A."/>
            <person name="Spriggs T."/>
            <person name="Hedblom E."/>
            <person name="Cotton M.D."/>
            <person name="Utterback T.R."/>
            <person name="Hanna M.C."/>
            <person name="Nguyen D.T."/>
            <person name="Saudek D.M."/>
            <person name="Brandon R.C."/>
            <person name="Fine L.D."/>
            <person name="Fritchman J.L."/>
            <person name="Fuhrmann J.L."/>
            <person name="Geoghagen N.S.M."/>
            <person name="Gnehm C.L."/>
            <person name="McDonald L.A."/>
            <person name="Small K.V."/>
            <person name="Fraser C.M."/>
            <person name="Smith H.O."/>
            <person name="Venter J.C."/>
        </authorList>
    </citation>
    <scope>NUCLEOTIDE SEQUENCE [LARGE SCALE GENOMIC DNA]</scope>
    <source>
        <strain>ATCC 51907 / DSM 11121 / KW20 / Rd</strain>
    </source>
</reference>
<evidence type="ECO:0000250" key="1"/>
<evidence type="ECO:0000255" key="2">
    <source>
        <dbReference type="HAMAP-Rule" id="MF_00539"/>
    </source>
</evidence>
<evidence type="ECO:0000256" key="3">
    <source>
        <dbReference type="SAM" id="MobiDB-lite"/>
    </source>
</evidence>
<evidence type="ECO:0000305" key="4"/>
<gene>
    <name evidence="2" type="primary">rpmA</name>
    <name evidence="2" type="synonym">rpl27</name>
    <name type="ordered locus">HI_0879</name>
</gene>
<name>RL27_HAEIN</name>
<proteinExistence type="inferred from homology"/>
<comment type="similarity">
    <text evidence="2">Belongs to the bacterial ribosomal protein bL27 family.</text>
</comment>
<keyword id="KW-1185">Reference proteome</keyword>
<keyword id="KW-0687">Ribonucleoprotein</keyword>
<keyword id="KW-0689">Ribosomal protein</keyword>
<protein>
    <recommendedName>
        <fullName evidence="2">Large ribosomal subunit protein bL27</fullName>
    </recommendedName>
    <alternativeName>
        <fullName evidence="4">50S ribosomal protein L27</fullName>
    </alternativeName>
</protein>
<sequence length="85" mass="9151">MATKKAGGSTRNGRDSEAKRLGVKRFGGESVLAGSIIVRQRGTKFHAGNNVGMGRDHTLFATADGKVKFEVKGEKSRKYVVIVTE</sequence>
<organism>
    <name type="scientific">Haemophilus influenzae (strain ATCC 51907 / DSM 11121 / KW20 / Rd)</name>
    <dbReference type="NCBI Taxonomy" id="71421"/>
    <lineage>
        <taxon>Bacteria</taxon>
        <taxon>Pseudomonadati</taxon>
        <taxon>Pseudomonadota</taxon>
        <taxon>Gammaproteobacteria</taxon>
        <taxon>Pasteurellales</taxon>
        <taxon>Pasteurellaceae</taxon>
        <taxon>Haemophilus</taxon>
    </lineage>
</organism>